<name>PDP1_YEAST</name>
<protein>
    <recommendedName>
        <fullName>[Pyruvate dehydrogenase [acetyl-transferring]]-phosphatase 1, mitochondrial</fullName>
        <shortName>PDP 1</shortName>
        <ecNumber evidence="11">3.1.3.43</ecNumber>
    </recommendedName>
    <alternativeName>
        <fullName>Phosphatase two C protein 5</fullName>
    </alternativeName>
    <alternativeName>
        <fullName>Protein phosphatase 2C homolog 5</fullName>
        <shortName>PP2C-5</shortName>
    </alternativeName>
    <alternativeName>
        <fullName>Protein phosphatase of PDH protein 1</fullName>
    </alternativeName>
    <alternativeName>
        <fullName>Pyruvate dehydrogenase complex phosphatase 1</fullName>
        <shortName>PDC phosphatase 1</shortName>
    </alternativeName>
</protein>
<organism>
    <name type="scientific">Saccharomyces cerevisiae (strain ATCC 204508 / S288c)</name>
    <name type="common">Baker's yeast</name>
    <dbReference type="NCBI Taxonomy" id="559292"/>
    <lineage>
        <taxon>Eukaryota</taxon>
        <taxon>Fungi</taxon>
        <taxon>Dikarya</taxon>
        <taxon>Ascomycota</taxon>
        <taxon>Saccharomycotina</taxon>
        <taxon>Saccharomycetes</taxon>
        <taxon>Saccharomycetales</taxon>
        <taxon>Saccharomycetaceae</taxon>
        <taxon>Saccharomyces</taxon>
    </lineage>
</organism>
<accession>Q12511</accession>
<accession>D6W2F1</accession>
<sequence length="572" mass="63669">MSPLTRTVAIKKTVKVLSKCQSGREYTQKFLQRAYSTSHANSTYYSRTKLFISSHSKALNIALLSGSLLLTYSYYSPKKILSLDTINGIKDYSTNTSGNINMPSPNPKGTETQKSQRSQNDQSVLILNDSKIEAKLHDREESHFVNRGTGIFRYDVAQLPSNHPIEDDHVEQIITIPIESEDGKSIEKDLYFFGIFDGHGGPFTSEKLSKDLVRYVAYQLGQVYDQNKTVFHSDPNQLIDSAISKGFLKLDNDLVIESFRKLFQDPNNTNIANTLPAISGSCALLSLYNSTNSILKVAVTGDSRALICGLDNEGNWTVKSLSTDQTGDNLDEVRRIRKEHPGEPNVIRNGRILGSLQPSRAFGDYRYKIKEVDGKPLSDLPEVAKLYFRREPRDFKTPPYVTAEPVITSAKIGENTKFMVMGSDGLFELLTNEEIASLVIRWMDKNMNLAPVKAEPGKLPKVIDVSEDKEAQRPAFRYKDNNSSSPSGSNPEYLIEDKNVATHLIRNALSAGGRKEYVSALVSIPSPMSRRYRDDLTVTVAFFGDSGTPSIVSNATSIVMNPEATTKPKPRL</sequence>
<proteinExistence type="evidence at protein level"/>
<evidence type="ECO:0000250" key="1"/>
<evidence type="ECO:0000255" key="2"/>
<evidence type="ECO:0000255" key="3">
    <source>
        <dbReference type="PROSITE-ProRule" id="PRU01082"/>
    </source>
</evidence>
<evidence type="ECO:0000256" key="4">
    <source>
        <dbReference type="SAM" id="MobiDB-lite"/>
    </source>
</evidence>
<evidence type="ECO:0000269" key="5">
    <source>
    </source>
</evidence>
<evidence type="ECO:0000269" key="6">
    <source>
    </source>
</evidence>
<evidence type="ECO:0000269" key="7">
    <source>
    </source>
</evidence>
<evidence type="ECO:0000269" key="8">
    <source>
    </source>
</evidence>
<evidence type="ECO:0000269" key="9">
    <source>
    </source>
</evidence>
<evidence type="ECO:0000305" key="10"/>
<evidence type="ECO:0000305" key="11">
    <source>
    </source>
</evidence>
<dbReference type="EC" id="3.1.3.43" evidence="11"/>
<dbReference type="EMBL" id="X94335">
    <property type="protein sequence ID" value="CAA64011.1"/>
    <property type="molecule type" value="Genomic_DNA"/>
</dbReference>
<dbReference type="EMBL" id="Z74998">
    <property type="protein sequence ID" value="CAA99287.1"/>
    <property type="molecule type" value="Genomic_DNA"/>
</dbReference>
<dbReference type="EMBL" id="BK006948">
    <property type="protein sequence ID" value="DAA10867.1"/>
    <property type="molecule type" value="Genomic_DNA"/>
</dbReference>
<dbReference type="PIR" id="S61650">
    <property type="entry name" value="S61650"/>
</dbReference>
<dbReference type="RefSeq" id="NP_014733.1">
    <property type="nucleotide sequence ID" value="NM_001183509.1"/>
</dbReference>
<dbReference type="SMR" id="Q12511"/>
<dbReference type="BioGRID" id="34488">
    <property type="interactions" value="124"/>
</dbReference>
<dbReference type="DIP" id="DIP-6439N"/>
<dbReference type="FunCoup" id="Q12511">
    <property type="interactions" value="704"/>
</dbReference>
<dbReference type="IntAct" id="Q12511">
    <property type="interactions" value="10"/>
</dbReference>
<dbReference type="MINT" id="Q12511"/>
<dbReference type="STRING" id="4932.YOR090C"/>
<dbReference type="GlyGen" id="Q12511">
    <property type="glycosylation" value="1 site"/>
</dbReference>
<dbReference type="iPTMnet" id="Q12511"/>
<dbReference type="PaxDb" id="4932-YOR090C"/>
<dbReference type="PeptideAtlas" id="Q12511"/>
<dbReference type="EnsemblFungi" id="YOR090C_mRNA">
    <property type="protein sequence ID" value="YOR090C"/>
    <property type="gene ID" value="YOR090C"/>
</dbReference>
<dbReference type="GeneID" id="854257"/>
<dbReference type="KEGG" id="sce:YOR090C"/>
<dbReference type="AGR" id="SGD:S000005616"/>
<dbReference type="SGD" id="S000005616">
    <property type="gene designation" value="PTC5"/>
</dbReference>
<dbReference type="VEuPathDB" id="FungiDB:YOR090C"/>
<dbReference type="eggNOG" id="KOG0700">
    <property type="taxonomic scope" value="Eukaryota"/>
</dbReference>
<dbReference type="GeneTree" id="ENSGT00940000172263"/>
<dbReference type="HOGENOM" id="CLU_021928_3_2_1"/>
<dbReference type="InParanoid" id="Q12511"/>
<dbReference type="OMA" id="DHNAWNP"/>
<dbReference type="OrthoDB" id="420076at2759"/>
<dbReference type="BioCyc" id="YEAST:G3O-33624-MONOMER"/>
<dbReference type="BioGRID-ORCS" id="854257">
    <property type="hits" value="0 hits in 10 CRISPR screens"/>
</dbReference>
<dbReference type="PRO" id="PR:Q12511"/>
<dbReference type="Proteomes" id="UP000002311">
    <property type="component" value="Chromosome XV"/>
</dbReference>
<dbReference type="RNAct" id="Q12511">
    <property type="molecule type" value="protein"/>
</dbReference>
<dbReference type="GO" id="GO:0005758">
    <property type="term" value="C:mitochondrial intermembrane space"/>
    <property type="evidence" value="ECO:0000314"/>
    <property type="project" value="SGD"/>
</dbReference>
<dbReference type="GO" id="GO:0005739">
    <property type="term" value="C:mitochondrion"/>
    <property type="evidence" value="ECO:0000314"/>
    <property type="project" value="SGD"/>
</dbReference>
<dbReference type="GO" id="GO:0005777">
    <property type="term" value="C:peroxisome"/>
    <property type="evidence" value="ECO:0000314"/>
    <property type="project" value="SGD"/>
</dbReference>
<dbReference type="GO" id="GO:0004741">
    <property type="term" value="F:[pyruvate dehydrogenase (acetyl-transferring)]-phosphatase activity"/>
    <property type="evidence" value="ECO:0000315"/>
    <property type="project" value="SGD"/>
</dbReference>
<dbReference type="GO" id="GO:0046872">
    <property type="term" value="F:metal ion binding"/>
    <property type="evidence" value="ECO:0007669"/>
    <property type="project" value="UniProtKB-KW"/>
</dbReference>
<dbReference type="GO" id="GO:0004722">
    <property type="term" value="F:protein serine/threonine phosphatase activity"/>
    <property type="evidence" value="ECO:0000314"/>
    <property type="project" value="SGD"/>
</dbReference>
<dbReference type="GO" id="GO:0007165">
    <property type="term" value="P:signal transduction"/>
    <property type="evidence" value="ECO:0000318"/>
    <property type="project" value="GO_Central"/>
</dbReference>
<dbReference type="CDD" id="cd00143">
    <property type="entry name" value="PP2Cc"/>
    <property type="match status" value="1"/>
</dbReference>
<dbReference type="Gene3D" id="3.60.40.10">
    <property type="entry name" value="PPM-type phosphatase domain"/>
    <property type="match status" value="1"/>
</dbReference>
<dbReference type="InterPro" id="IPR015655">
    <property type="entry name" value="PP2C"/>
</dbReference>
<dbReference type="InterPro" id="IPR000222">
    <property type="entry name" value="PP2C_BS"/>
</dbReference>
<dbReference type="InterPro" id="IPR036457">
    <property type="entry name" value="PPM-type-like_dom_sf"/>
</dbReference>
<dbReference type="InterPro" id="IPR001932">
    <property type="entry name" value="PPM-type_phosphatase-like_dom"/>
</dbReference>
<dbReference type="PANTHER" id="PTHR13832:SF792">
    <property type="entry name" value="GM14286P"/>
    <property type="match status" value="1"/>
</dbReference>
<dbReference type="PANTHER" id="PTHR13832">
    <property type="entry name" value="PROTEIN PHOSPHATASE 2C"/>
    <property type="match status" value="1"/>
</dbReference>
<dbReference type="Pfam" id="PF00481">
    <property type="entry name" value="PP2C"/>
    <property type="match status" value="1"/>
</dbReference>
<dbReference type="SMART" id="SM00332">
    <property type="entry name" value="PP2Cc"/>
    <property type="match status" value="1"/>
</dbReference>
<dbReference type="SUPFAM" id="SSF81606">
    <property type="entry name" value="PP2C-like"/>
    <property type="match status" value="1"/>
</dbReference>
<dbReference type="PROSITE" id="PS01032">
    <property type="entry name" value="PPM_1"/>
    <property type="match status" value="1"/>
</dbReference>
<dbReference type="PROSITE" id="PS51746">
    <property type="entry name" value="PPM_2"/>
    <property type="match status" value="1"/>
</dbReference>
<feature type="transit peptide" description="Mitochondrion" evidence="2">
    <location>
        <begin position="1"/>
        <end status="unknown"/>
    </location>
</feature>
<feature type="chain" id="PRO_0000057778" description="[Pyruvate dehydrogenase [acetyl-transferring]]-phosphatase 1, mitochondrial">
    <location>
        <begin status="unknown"/>
        <end position="572"/>
    </location>
</feature>
<feature type="domain" description="PPM-type phosphatase" evidence="3">
    <location>
        <begin position="153"/>
        <end position="543"/>
    </location>
</feature>
<feature type="region of interest" description="Disordered" evidence="4">
    <location>
        <begin position="95"/>
        <end position="122"/>
    </location>
</feature>
<feature type="region of interest" description="Disordered" evidence="4">
    <location>
        <begin position="470"/>
        <end position="492"/>
    </location>
</feature>
<feature type="compositionally biased region" description="Basic and acidic residues" evidence="4">
    <location>
        <begin position="470"/>
        <end position="480"/>
    </location>
</feature>
<feature type="compositionally biased region" description="Low complexity" evidence="4">
    <location>
        <begin position="481"/>
        <end position="491"/>
    </location>
</feature>
<feature type="binding site" evidence="1">
    <location>
        <position position="197"/>
    </location>
    <ligand>
        <name>Mn(2+)</name>
        <dbReference type="ChEBI" id="CHEBI:29035"/>
        <label>1</label>
    </ligand>
</feature>
<feature type="binding site" evidence="1">
    <location>
        <position position="197"/>
    </location>
    <ligand>
        <name>Mn(2+)</name>
        <dbReference type="ChEBI" id="CHEBI:29035"/>
        <label>2</label>
    </ligand>
</feature>
<feature type="binding site" evidence="1">
    <location>
        <position position="198"/>
    </location>
    <ligand>
        <name>Mn(2+)</name>
        <dbReference type="ChEBI" id="CHEBI:29035"/>
        <label>1</label>
    </ligand>
</feature>
<feature type="binding site" evidence="1">
    <location>
        <position position="424"/>
    </location>
    <ligand>
        <name>Mn(2+)</name>
        <dbReference type="ChEBI" id="CHEBI:29035"/>
        <label>2</label>
    </ligand>
</feature>
<feature type="binding site" evidence="1">
    <location>
        <position position="480"/>
    </location>
    <ligand>
        <name>Mn(2+)</name>
        <dbReference type="ChEBI" id="CHEBI:29035"/>
        <label>2</label>
    </ligand>
</feature>
<gene>
    <name type="primary">PTC5</name>
    <name type="synonym">PPP1</name>
    <name type="ordered locus">YOR090C</name>
    <name type="ORF">YOR3157C</name>
</gene>
<comment type="function">
    <text evidence="7 8">Catalyzes the dephosphorylation and concomitant reactivation of the E1 alpha subunit (PDA1) of the pyruvate dehydrogenase complex.</text>
</comment>
<comment type="catalytic activity">
    <reaction evidence="11">
        <text>O-phospho-L-seryl-[pyruvate dehydrogenase E1 alpha subunit] + H2O = L-seryl-[pyruvate dehydrogenase E1 alpha subunit] + phosphate</text>
        <dbReference type="Rhea" id="RHEA:12669"/>
        <dbReference type="Rhea" id="RHEA-COMP:13689"/>
        <dbReference type="Rhea" id="RHEA-COMP:13690"/>
        <dbReference type="ChEBI" id="CHEBI:15377"/>
        <dbReference type="ChEBI" id="CHEBI:29999"/>
        <dbReference type="ChEBI" id="CHEBI:43474"/>
        <dbReference type="ChEBI" id="CHEBI:83421"/>
        <dbReference type="EC" id="3.1.3.43"/>
    </reaction>
    <physiologicalReaction direction="left-to-right" evidence="11">
        <dbReference type="Rhea" id="RHEA:12670"/>
    </physiologicalReaction>
</comment>
<comment type="cofactor">
    <cofactor evidence="1">
        <name>Mg(2+)</name>
        <dbReference type="ChEBI" id="CHEBI:18420"/>
    </cofactor>
    <cofactor evidence="1">
        <name>Mn(2+)</name>
        <dbReference type="ChEBI" id="CHEBI:29035"/>
    </cofactor>
    <text evidence="1">Binds 2 magnesium or manganese ions per subunit.</text>
</comment>
<comment type="subcellular location">
    <subcellularLocation>
        <location evidence="6 7 9">Mitochondrion intermembrane space</location>
    </subcellularLocation>
</comment>
<comment type="PTM">
    <text>Processed by mitochondrial inner membrane protease (IMP) complex and released to the intermembrane space.</text>
</comment>
<comment type="miscellaneous">
    <text evidence="5">Present with 7550 molecules/cell in log phase SD medium.</text>
</comment>
<comment type="similarity">
    <text evidence="10">Belongs to the PP2C family.</text>
</comment>
<reference key="1">
    <citation type="journal article" date="1997" name="Yeast">
        <title>DNA sequencing and analysis of 130 kb from yeast chromosome XV.</title>
        <authorList>
            <person name="Voss H."/>
            <person name="Benes V."/>
            <person name="Andrade M.A."/>
            <person name="Valencia A."/>
            <person name="Rechmann S."/>
            <person name="Teodoru C."/>
            <person name="Schwager C."/>
            <person name="Paces V."/>
            <person name="Sander C."/>
            <person name="Ansorge W."/>
        </authorList>
    </citation>
    <scope>NUCLEOTIDE SEQUENCE [GENOMIC DNA]</scope>
</reference>
<reference key="2">
    <citation type="journal article" date="1997" name="Nature">
        <title>The nucleotide sequence of Saccharomyces cerevisiae chromosome XV.</title>
        <authorList>
            <person name="Dujon B."/>
            <person name="Albermann K."/>
            <person name="Aldea M."/>
            <person name="Alexandraki D."/>
            <person name="Ansorge W."/>
            <person name="Arino J."/>
            <person name="Benes V."/>
            <person name="Bohn C."/>
            <person name="Bolotin-Fukuhara M."/>
            <person name="Bordonne R."/>
            <person name="Boyer J."/>
            <person name="Camasses A."/>
            <person name="Casamayor A."/>
            <person name="Casas C."/>
            <person name="Cheret G."/>
            <person name="Cziepluch C."/>
            <person name="Daignan-Fornier B."/>
            <person name="Dang V.-D."/>
            <person name="de Haan M."/>
            <person name="Delius H."/>
            <person name="Durand P."/>
            <person name="Fairhead C."/>
            <person name="Feldmann H."/>
            <person name="Gaillon L."/>
            <person name="Galisson F."/>
            <person name="Gamo F.-J."/>
            <person name="Gancedo C."/>
            <person name="Goffeau A."/>
            <person name="Goulding S.E."/>
            <person name="Grivell L.A."/>
            <person name="Habbig B."/>
            <person name="Hand N.J."/>
            <person name="Hani J."/>
            <person name="Hattenhorst U."/>
            <person name="Hebling U."/>
            <person name="Hernando Y."/>
            <person name="Herrero E."/>
            <person name="Heumann K."/>
            <person name="Hiesel R."/>
            <person name="Hilger F."/>
            <person name="Hofmann B."/>
            <person name="Hollenberg C.P."/>
            <person name="Hughes B."/>
            <person name="Jauniaux J.-C."/>
            <person name="Kalogeropoulos A."/>
            <person name="Katsoulou C."/>
            <person name="Kordes E."/>
            <person name="Lafuente M.J."/>
            <person name="Landt O."/>
            <person name="Louis E.J."/>
            <person name="Maarse A.C."/>
            <person name="Madania A."/>
            <person name="Mannhaupt G."/>
            <person name="Marck C."/>
            <person name="Martin R.P."/>
            <person name="Mewes H.-W."/>
            <person name="Michaux G."/>
            <person name="Paces V."/>
            <person name="Parle-McDermott A.G."/>
            <person name="Pearson B.M."/>
            <person name="Perrin A."/>
            <person name="Pettersson B."/>
            <person name="Poch O."/>
            <person name="Pohl T.M."/>
            <person name="Poirey R."/>
            <person name="Portetelle D."/>
            <person name="Pujol A."/>
            <person name="Purnelle B."/>
            <person name="Ramezani Rad M."/>
            <person name="Rechmann S."/>
            <person name="Schwager C."/>
            <person name="Schweizer M."/>
            <person name="Sor F."/>
            <person name="Sterky F."/>
            <person name="Tarassov I.A."/>
            <person name="Teodoru C."/>
            <person name="Tettelin H."/>
            <person name="Thierry A."/>
            <person name="Tobiasch E."/>
            <person name="Tzermia M."/>
            <person name="Uhlen M."/>
            <person name="Unseld M."/>
            <person name="Valens M."/>
            <person name="Vandenbol M."/>
            <person name="Vetter I."/>
            <person name="Vlcek C."/>
            <person name="Voet M."/>
            <person name="Volckaert G."/>
            <person name="Voss H."/>
            <person name="Wambutt R."/>
            <person name="Wedler H."/>
            <person name="Wiemann S."/>
            <person name="Winsor B."/>
            <person name="Wolfe K.H."/>
            <person name="Zollner A."/>
            <person name="Zumstein E."/>
            <person name="Kleine K."/>
        </authorList>
    </citation>
    <scope>NUCLEOTIDE SEQUENCE [LARGE SCALE GENOMIC DNA]</scope>
    <source>
        <strain>ATCC 204508 / S288c</strain>
    </source>
</reference>
<reference key="3">
    <citation type="journal article" date="2014" name="G3 (Bethesda)">
        <title>The reference genome sequence of Saccharomyces cerevisiae: Then and now.</title>
        <authorList>
            <person name="Engel S.R."/>
            <person name="Dietrich F.S."/>
            <person name="Fisk D.G."/>
            <person name="Binkley G."/>
            <person name="Balakrishnan R."/>
            <person name="Costanzo M.C."/>
            <person name="Dwight S.S."/>
            <person name="Hitz B.C."/>
            <person name="Karra K."/>
            <person name="Nash R.S."/>
            <person name="Weng S."/>
            <person name="Wong E.D."/>
            <person name="Lloyd P."/>
            <person name="Skrzypek M.S."/>
            <person name="Miyasato S.R."/>
            <person name="Simison M."/>
            <person name="Cherry J.M."/>
        </authorList>
    </citation>
    <scope>GENOME REANNOTATION</scope>
    <source>
        <strain>ATCC 204508 / S288c</strain>
    </source>
</reference>
<reference key="4">
    <citation type="journal article" date="2003" name="Nature">
        <title>Global analysis of protein expression in yeast.</title>
        <authorList>
            <person name="Ghaemmaghami S."/>
            <person name="Huh W.-K."/>
            <person name="Bower K."/>
            <person name="Howson R.W."/>
            <person name="Belle A."/>
            <person name="Dephoure N."/>
            <person name="O'Shea E.K."/>
            <person name="Weissman J.S."/>
        </authorList>
    </citation>
    <scope>LEVEL OF PROTEIN EXPRESSION [LARGE SCALE ANALYSIS]</scope>
</reference>
<reference key="5">
    <citation type="journal article" date="2003" name="Proc. Natl. Acad. Sci. U.S.A.">
        <title>The proteome of Saccharomyces cerevisiae mitochondria.</title>
        <authorList>
            <person name="Sickmann A."/>
            <person name="Reinders J."/>
            <person name="Wagner Y."/>
            <person name="Joppich C."/>
            <person name="Zahedi R.P."/>
            <person name="Meyer H.E."/>
            <person name="Schoenfisch B."/>
            <person name="Perschil I."/>
            <person name="Chacinska A."/>
            <person name="Guiard B."/>
            <person name="Rehling P."/>
            <person name="Pfanner N."/>
            <person name="Meisinger C."/>
        </authorList>
    </citation>
    <scope>SUBCELLULAR LOCATION [LARGE SCALE ANALYSIS]</scope>
    <source>
        <strain>ATCC 76625 / YPH499</strain>
    </source>
</reference>
<reference key="6">
    <citation type="journal article" date="2006" name="FEBS Lett.">
        <title>YIL042c and YOR090c encode the kinase and phosphatase of the Saccharomyces cerevisiae pyruvate dehydrogenase complex.</title>
        <authorList>
            <person name="Krause-Buchholz U."/>
            <person name="Gey U."/>
            <person name="Wunschmann J."/>
            <person name="Becker S."/>
            <person name="Rodel G."/>
        </authorList>
    </citation>
    <scope>FUNCTION</scope>
    <scope>SUBCELLULAR LOCATION</scope>
</reference>
<reference key="7">
    <citation type="journal article" date="2008" name="J. Biol. Chem.">
        <title>Yeast pyruvate dehydrogenase complex is regulated by a concerted activity of two kinases and two phosphatases.</title>
        <authorList>
            <person name="Gey U."/>
            <person name="Czupalla C."/>
            <person name="Hoflack B."/>
            <person name="Rodel G."/>
            <person name="Krause-Buchholz U."/>
        </authorList>
    </citation>
    <scope>FUNCTION</scope>
    <scope>CATALYTIC ACTIVITY</scope>
</reference>
<reference key="8">
    <citation type="journal article" date="2012" name="Mol. Cell. Proteomics">
        <title>Intermembrane space proteome of yeast mitochondria.</title>
        <authorList>
            <person name="Voegtle F.N."/>
            <person name="Burkhart J.M."/>
            <person name="Rao S."/>
            <person name="Gerbeth C."/>
            <person name="Hinrichs J."/>
            <person name="Martinou J.C."/>
            <person name="Chacinska A."/>
            <person name="Sickmann A."/>
            <person name="Zahedi R.P."/>
            <person name="Meisinger C."/>
        </authorList>
    </citation>
    <scope>IDENTIFICATION BY MASS SPECTROMETRY</scope>
    <scope>SUBCELLULAR LOCATION [LARGE SCALE ANALYSIS]</scope>
</reference>
<keyword id="KW-0378">Hydrolase</keyword>
<keyword id="KW-0460">Magnesium</keyword>
<keyword id="KW-0464">Manganese</keyword>
<keyword id="KW-0479">Metal-binding</keyword>
<keyword id="KW-0496">Mitochondrion</keyword>
<keyword id="KW-0904">Protein phosphatase</keyword>
<keyword id="KW-1185">Reference proteome</keyword>
<keyword id="KW-0809">Transit peptide</keyword>